<dbReference type="EC" id="5.4.2.11" evidence="1"/>
<dbReference type="EMBL" id="AE013218">
    <property type="protein sequence ID" value="AAM67849.1"/>
    <property type="molecule type" value="Genomic_DNA"/>
</dbReference>
<dbReference type="RefSeq" id="WP_011053816.1">
    <property type="nucleotide sequence ID" value="NC_004061.1"/>
</dbReference>
<dbReference type="SMR" id="Q8K9N1"/>
<dbReference type="STRING" id="198804.BUsg_294"/>
<dbReference type="GeneID" id="93003764"/>
<dbReference type="KEGG" id="bas:BUsg_294"/>
<dbReference type="eggNOG" id="COG0588">
    <property type="taxonomic scope" value="Bacteria"/>
</dbReference>
<dbReference type="HOGENOM" id="CLU_033323_1_1_6"/>
<dbReference type="UniPathway" id="UPA00109">
    <property type="reaction ID" value="UER00186"/>
</dbReference>
<dbReference type="Proteomes" id="UP000000416">
    <property type="component" value="Chromosome"/>
</dbReference>
<dbReference type="GO" id="GO:0004619">
    <property type="term" value="F:phosphoglycerate mutase activity"/>
    <property type="evidence" value="ECO:0007669"/>
    <property type="project" value="UniProtKB-EC"/>
</dbReference>
<dbReference type="GO" id="GO:0006094">
    <property type="term" value="P:gluconeogenesis"/>
    <property type="evidence" value="ECO:0007669"/>
    <property type="project" value="UniProtKB-UniRule"/>
</dbReference>
<dbReference type="GO" id="GO:0006096">
    <property type="term" value="P:glycolytic process"/>
    <property type="evidence" value="ECO:0007669"/>
    <property type="project" value="UniProtKB-UniRule"/>
</dbReference>
<dbReference type="CDD" id="cd07067">
    <property type="entry name" value="HP_PGM_like"/>
    <property type="match status" value="1"/>
</dbReference>
<dbReference type="FunFam" id="3.40.50.1240:FF:000003">
    <property type="entry name" value="2,3-bisphosphoglycerate-dependent phosphoglycerate mutase"/>
    <property type="match status" value="1"/>
</dbReference>
<dbReference type="Gene3D" id="3.40.50.1240">
    <property type="entry name" value="Phosphoglycerate mutase-like"/>
    <property type="match status" value="1"/>
</dbReference>
<dbReference type="HAMAP" id="MF_01039">
    <property type="entry name" value="PGAM_GpmA"/>
    <property type="match status" value="1"/>
</dbReference>
<dbReference type="InterPro" id="IPR013078">
    <property type="entry name" value="His_Pase_superF_clade-1"/>
</dbReference>
<dbReference type="InterPro" id="IPR029033">
    <property type="entry name" value="His_PPase_superfam"/>
</dbReference>
<dbReference type="InterPro" id="IPR001345">
    <property type="entry name" value="PG/BPGM_mutase_AS"/>
</dbReference>
<dbReference type="InterPro" id="IPR005952">
    <property type="entry name" value="Phosphogly_mut1"/>
</dbReference>
<dbReference type="NCBIfam" id="TIGR01258">
    <property type="entry name" value="pgm_1"/>
    <property type="match status" value="1"/>
</dbReference>
<dbReference type="NCBIfam" id="NF010713">
    <property type="entry name" value="PRK14115.1"/>
    <property type="match status" value="1"/>
</dbReference>
<dbReference type="PANTHER" id="PTHR11931">
    <property type="entry name" value="PHOSPHOGLYCERATE MUTASE"/>
    <property type="match status" value="1"/>
</dbReference>
<dbReference type="Pfam" id="PF00300">
    <property type="entry name" value="His_Phos_1"/>
    <property type="match status" value="1"/>
</dbReference>
<dbReference type="PIRSF" id="PIRSF000709">
    <property type="entry name" value="6PFK_2-Ptase"/>
    <property type="match status" value="1"/>
</dbReference>
<dbReference type="SMART" id="SM00855">
    <property type="entry name" value="PGAM"/>
    <property type="match status" value="1"/>
</dbReference>
<dbReference type="SUPFAM" id="SSF53254">
    <property type="entry name" value="Phosphoglycerate mutase-like"/>
    <property type="match status" value="1"/>
</dbReference>
<dbReference type="PROSITE" id="PS00175">
    <property type="entry name" value="PG_MUTASE"/>
    <property type="match status" value="1"/>
</dbReference>
<comment type="function">
    <text evidence="1">Catalyzes the interconversion of 2-phosphoglycerate and 3-phosphoglycerate.</text>
</comment>
<comment type="catalytic activity">
    <reaction evidence="1">
        <text>(2R)-2-phosphoglycerate = (2R)-3-phosphoglycerate</text>
        <dbReference type="Rhea" id="RHEA:15901"/>
        <dbReference type="ChEBI" id="CHEBI:58272"/>
        <dbReference type="ChEBI" id="CHEBI:58289"/>
        <dbReference type="EC" id="5.4.2.11"/>
    </reaction>
</comment>
<comment type="pathway">
    <text evidence="1">Carbohydrate degradation; glycolysis; pyruvate from D-glyceraldehyde 3-phosphate: step 3/5.</text>
</comment>
<comment type="subunit">
    <text evidence="1">Homodimer.</text>
</comment>
<comment type="similarity">
    <text evidence="1">Belongs to the phosphoglycerate mutase family. BPG-dependent PGAM subfamily.</text>
</comment>
<name>GPMA_BUCAP</name>
<keyword id="KW-0312">Gluconeogenesis</keyword>
<keyword id="KW-0324">Glycolysis</keyword>
<keyword id="KW-0413">Isomerase</keyword>
<sequence>MKTNKLVLIRHGQSKWNKLNKFTGWHDIELSDNGINEALKAGSLLKKEKFFFDYAHTSMLKRAIHTLRYILDTLDQSWLPVQKSWRLNERHYGALEGLNKDEMISKYGEEQVNLWRRSFEIIPPQIRLNDKRFPGNDIRYSNIDNNELPLGESLELTAKRVIPYWNKFILPQIKKRNRVLIVAHGNSLRALIQFLNKIDNKKILELNIPTATPIILEFNEEYNSIKWYYL</sequence>
<gene>
    <name evidence="1" type="primary">gpmA</name>
    <name type="ordered locus">BUsg_294</name>
</gene>
<reference key="1">
    <citation type="journal article" date="2002" name="Science">
        <title>50 million years of genomic stasis in endosymbiotic bacteria.</title>
        <authorList>
            <person name="Tamas I."/>
            <person name="Klasson L."/>
            <person name="Canbaeck B."/>
            <person name="Naeslund A.K."/>
            <person name="Eriksson A.-S."/>
            <person name="Wernegreen J.J."/>
            <person name="Sandstroem J.P."/>
            <person name="Moran N.A."/>
            <person name="Andersson S.G.E."/>
        </authorList>
    </citation>
    <scope>NUCLEOTIDE SEQUENCE [LARGE SCALE GENOMIC DNA]</scope>
    <source>
        <strain>Sg</strain>
    </source>
</reference>
<accession>Q8K9N1</accession>
<organism>
    <name type="scientific">Buchnera aphidicola subsp. Schizaphis graminum (strain Sg)</name>
    <dbReference type="NCBI Taxonomy" id="198804"/>
    <lineage>
        <taxon>Bacteria</taxon>
        <taxon>Pseudomonadati</taxon>
        <taxon>Pseudomonadota</taxon>
        <taxon>Gammaproteobacteria</taxon>
        <taxon>Enterobacterales</taxon>
        <taxon>Erwiniaceae</taxon>
        <taxon>Buchnera</taxon>
    </lineage>
</organism>
<evidence type="ECO:0000255" key="1">
    <source>
        <dbReference type="HAMAP-Rule" id="MF_01039"/>
    </source>
</evidence>
<protein>
    <recommendedName>
        <fullName evidence="1">2,3-bisphosphoglycerate-dependent phosphoglycerate mutase</fullName>
        <shortName evidence="1">BPG-dependent PGAM</shortName>
        <shortName evidence="1">PGAM</shortName>
        <shortName evidence="1">Phosphoglyceromutase</shortName>
        <shortName evidence="1">dPGM</shortName>
        <ecNumber evidence="1">5.4.2.11</ecNumber>
    </recommendedName>
</protein>
<proteinExistence type="inferred from homology"/>
<feature type="chain" id="PRO_0000179859" description="2,3-bisphosphoglycerate-dependent phosphoglycerate mutase">
    <location>
        <begin position="1"/>
        <end position="230"/>
    </location>
</feature>
<feature type="active site" description="Tele-phosphohistidine intermediate" evidence="1">
    <location>
        <position position="11"/>
    </location>
</feature>
<feature type="active site" description="Proton donor/acceptor" evidence="1">
    <location>
        <position position="89"/>
    </location>
</feature>
<feature type="binding site" evidence="1">
    <location>
        <begin position="10"/>
        <end position="17"/>
    </location>
    <ligand>
        <name>substrate</name>
    </ligand>
</feature>
<feature type="binding site" evidence="1">
    <location>
        <begin position="23"/>
        <end position="24"/>
    </location>
    <ligand>
        <name>substrate</name>
    </ligand>
</feature>
<feature type="binding site" evidence="1">
    <location>
        <position position="62"/>
    </location>
    <ligand>
        <name>substrate</name>
    </ligand>
</feature>
<feature type="binding site" evidence="1">
    <location>
        <begin position="89"/>
        <end position="92"/>
    </location>
    <ligand>
        <name>substrate</name>
    </ligand>
</feature>
<feature type="binding site" evidence="1">
    <location>
        <position position="100"/>
    </location>
    <ligand>
        <name>substrate</name>
    </ligand>
</feature>
<feature type="binding site" evidence="1">
    <location>
        <begin position="116"/>
        <end position="117"/>
    </location>
    <ligand>
        <name>substrate</name>
    </ligand>
</feature>
<feature type="binding site" evidence="1">
    <location>
        <begin position="185"/>
        <end position="186"/>
    </location>
    <ligand>
        <name>substrate</name>
    </ligand>
</feature>
<feature type="site" description="Transition state stabilizer" evidence="1">
    <location>
        <position position="184"/>
    </location>
</feature>